<proteinExistence type="inferred from homology"/>
<accession>Q87KQ4</accession>
<gene>
    <name evidence="1" type="primary">rpoB</name>
    <name type="ordered locus">VP2922</name>
</gene>
<protein>
    <recommendedName>
        <fullName evidence="1">DNA-directed RNA polymerase subunit beta</fullName>
        <shortName evidence="1">RNAP subunit beta</shortName>
        <ecNumber evidence="1">2.7.7.6</ecNumber>
    </recommendedName>
    <alternativeName>
        <fullName evidence="1">RNA polymerase subunit beta</fullName>
    </alternativeName>
    <alternativeName>
        <fullName evidence="1">Transcriptase subunit beta</fullName>
    </alternativeName>
</protein>
<feature type="chain" id="PRO_0000047993" description="DNA-directed RNA polymerase subunit beta">
    <location>
        <begin position="1"/>
        <end position="1342"/>
    </location>
</feature>
<comment type="function">
    <text evidence="1">DNA-dependent RNA polymerase catalyzes the transcription of DNA into RNA using the four ribonucleoside triphosphates as substrates.</text>
</comment>
<comment type="catalytic activity">
    <reaction evidence="1">
        <text>RNA(n) + a ribonucleoside 5'-triphosphate = RNA(n+1) + diphosphate</text>
        <dbReference type="Rhea" id="RHEA:21248"/>
        <dbReference type="Rhea" id="RHEA-COMP:14527"/>
        <dbReference type="Rhea" id="RHEA-COMP:17342"/>
        <dbReference type="ChEBI" id="CHEBI:33019"/>
        <dbReference type="ChEBI" id="CHEBI:61557"/>
        <dbReference type="ChEBI" id="CHEBI:140395"/>
        <dbReference type="EC" id="2.7.7.6"/>
    </reaction>
</comment>
<comment type="subunit">
    <text evidence="1">The RNAP catalytic core consists of 2 alpha, 1 beta, 1 beta' and 1 omega subunit. When a sigma factor is associated with the core the holoenzyme is formed, which can initiate transcription.</text>
</comment>
<comment type="similarity">
    <text evidence="1">Belongs to the RNA polymerase beta chain family.</text>
</comment>
<organism>
    <name type="scientific">Vibrio parahaemolyticus serotype O3:K6 (strain RIMD 2210633)</name>
    <dbReference type="NCBI Taxonomy" id="223926"/>
    <lineage>
        <taxon>Bacteria</taxon>
        <taxon>Pseudomonadati</taxon>
        <taxon>Pseudomonadota</taxon>
        <taxon>Gammaproteobacteria</taxon>
        <taxon>Vibrionales</taxon>
        <taxon>Vibrionaceae</taxon>
        <taxon>Vibrio</taxon>
    </lineage>
</organism>
<name>RPOB_VIBPA</name>
<sequence>MVYSYTEKKRIRKDFGTRPQVLDIPYLLSIQLDSFDKFIEQDPEGQYGLEAAFRSVFPIQSYNGNSELQYVSYRLGEPVFDVKECQIRGVTYSKPLRVKLRLVIFDKDAPAGTVKDIKEQEVYMGEIPLMTDNGTFVINGTERVIVSQLHRSPGVFFDSDKGKTHSSGKVLYNARVIPYRGSWLDFEFDPKDNLYVRIDRRRKLPASIILRALGKSTEEILDIFFEKVNFEVKDQTLLMELVPDRLRGETASFDIESNGKVYVEQGRRVTARHIRQLEKDGVDHIEVPVEYIVGKVASKDYINEATGEIIVNANQEISLEALANLSQAGHKALEVLFTNDLDHGPFMSETLRIDSTVDRISALVEIYRMMRPGEPPTKEAAEALFESLFFSEERYDLSTVGRMKFNSSIGREDAQEQGTLDETDIIEVMKKLIAIRNGKGEVDDIDHLGNRRIRSVGEMAENQFRVGLVRVERAVKERLSLGDLDAVMPQDLINAKPISAAVKEFFGSSQLSQFMDQNNPLSEVTHKRRISALGPGGLTRERAGFEVRDVHVTHYGRLCPIETPEGPNIGLINSLSAFARCNEYGFLETPYRRVVDGVVTDEVDYLSAIEEGQFVIAQANAKLNEDGTFADELITARQKGESGLHPREHAQYMDVATNQVVSIAASLIPFLEHDDANRALMGANMQRQAVPTLKADKPLVGTGIERNVAVDSGVTAVAKRGGVIQSVDASRIVVKVNEEELVPGEAGIDIYNLTKYTRSNQNTCINQRPCVMPGEPVARGDVLADGPSTDLGELALGQNMRIAFMPWNGYNFEDSILVSERVVQEDRFTTIHIQELTCVARDTKLGSEEITADIPNVGESALSKLDESGIVYIGAEVKGGDILVGKVTPKGETQLTPEEKLLRAIFGEKASDVKDTSLRVPNSVSGTIIDVQVFTRDGVEKDKRALEIEQMQLKEAKKDLTEEFQILEGGLLNRVKAVLIEGGYSEAKLDATDRKKWLELTLEDDALQTQLEQLAEQWDELKADFDKKFETKRRKITQGDDLAPGVLKIVKVYLAVKRRIQPGDKMAGRHGNKGVISKINPVEDMPYDEKGQPVDIVLNPLGVPSRMNIGQILEVHLGLAAKGIGDKINQMVKEQQELAKFREFLQKVYDLGDTRQKVDIASLSDDEVRTLIKNLRGGLPIATPVFDGAPEASIKALLELADLPTSGQLTLFDGRTGDAFERPVTVGYMYMLKLNHLVDDKMHARSTGSYSLVTQQPLGGKAQFGGQRFGEMEVWALEAYGAAYTLQEMLTVKSDDVNGRTKMYKNIVDGNHSMEPGMPESFNVLLKEIRSLGINIELEDEE</sequence>
<keyword id="KW-0240">DNA-directed RNA polymerase</keyword>
<keyword id="KW-0548">Nucleotidyltransferase</keyword>
<keyword id="KW-0804">Transcription</keyword>
<keyword id="KW-0808">Transferase</keyword>
<dbReference type="EC" id="2.7.7.6" evidence="1"/>
<dbReference type="EMBL" id="BA000031">
    <property type="protein sequence ID" value="BAC61185.1"/>
    <property type="molecule type" value="Genomic_DNA"/>
</dbReference>
<dbReference type="RefSeq" id="NP_799301.1">
    <property type="nucleotide sequence ID" value="NC_004603.1"/>
</dbReference>
<dbReference type="RefSeq" id="WP_005456486.1">
    <property type="nucleotide sequence ID" value="NC_004603.1"/>
</dbReference>
<dbReference type="SMR" id="Q87KQ4"/>
<dbReference type="GeneID" id="1190497"/>
<dbReference type="KEGG" id="vpa:VP2922"/>
<dbReference type="PATRIC" id="fig|223926.6.peg.2810"/>
<dbReference type="eggNOG" id="COG0085">
    <property type="taxonomic scope" value="Bacteria"/>
</dbReference>
<dbReference type="HOGENOM" id="CLU_000524_4_0_6"/>
<dbReference type="Proteomes" id="UP000002493">
    <property type="component" value="Chromosome 1"/>
</dbReference>
<dbReference type="GO" id="GO:0000428">
    <property type="term" value="C:DNA-directed RNA polymerase complex"/>
    <property type="evidence" value="ECO:0007669"/>
    <property type="project" value="UniProtKB-KW"/>
</dbReference>
<dbReference type="GO" id="GO:0003677">
    <property type="term" value="F:DNA binding"/>
    <property type="evidence" value="ECO:0007669"/>
    <property type="project" value="UniProtKB-UniRule"/>
</dbReference>
<dbReference type="GO" id="GO:0003899">
    <property type="term" value="F:DNA-directed RNA polymerase activity"/>
    <property type="evidence" value="ECO:0007669"/>
    <property type="project" value="UniProtKB-UniRule"/>
</dbReference>
<dbReference type="GO" id="GO:0032549">
    <property type="term" value="F:ribonucleoside binding"/>
    <property type="evidence" value="ECO:0007669"/>
    <property type="project" value="InterPro"/>
</dbReference>
<dbReference type="GO" id="GO:0006351">
    <property type="term" value="P:DNA-templated transcription"/>
    <property type="evidence" value="ECO:0007669"/>
    <property type="project" value="UniProtKB-UniRule"/>
</dbReference>
<dbReference type="CDD" id="cd00653">
    <property type="entry name" value="RNA_pol_B_RPB2"/>
    <property type="match status" value="1"/>
</dbReference>
<dbReference type="FunFam" id="2.30.150.10:FF:000001">
    <property type="entry name" value="DNA-directed RNA polymerase subunit beta"/>
    <property type="match status" value="1"/>
</dbReference>
<dbReference type="FunFam" id="2.40.270.10:FF:000003">
    <property type="entry name" value="DNA-directed RNA polymerase subunit beta"/>
    <property type="match status" value="1"/>
</dbReference>
<dbReference type="FunFam" id="2.40.270.10:FF:000004">
    <property type="entry name" value="DNA-directed RNA polymerase subunit beta"/>
    <property type="match status" value="1"/>
</dbReference>
<dbReference type="FunFam" id="2.40.50.100:FF:000006">
    <property type="entry name" value="DNA-directed RNA polymerase subunit beta"/>
    <property type="match status" value="1"/>
</dbReference>
<dbReference type="FunFam" id="2.40.50.150:FF:000001">
    <property type="entry name" value="DNA-directed RNA polymerase subunit beta"/>
    <property type="match status" value="1"/>
</dbReference>
<dbReference type="FunFam" id="3.90.1100.10:FF:000002">
    <property type="entry name" value="DNA-directed RNA polymerase subunit beta"/>
    <property type="match status" value="1"/>
</dbReference>
<dbReference type="FunFam" id="3.90.1800.10:FF:000001">
    <property type="entry name" value="DNA-directed RNA polymerase subunit beta"/>
    <property type="match status" value="1"/>
</dbReference>
<dbReference type="Gene3D" id="2.40.50.100">
    <property type="match status" value="1"/>
</dbReference>
<dbReference type="Gene3D" id="2.40.50.150">
    <property type="match status" value="1"/>
</dbReference>
<dbReference type="Gene3D" id="3.90.1100.10">
    <property type="match status" value="2"/>
</dbReference>
<dbReference type="Gene3D" id="6.10.140.1670">
    <property type="match status" value="1"/>
</dbReference>
<dbReference type="Gene3D" id="2.30.150.10">
    <property type="entry name" value="DNA-directed RNA polymerase, beta subunit, external 1 domain"/>
    <property type="match status" value="1"/>
</dbReference>
<dbReference type="Gene3D" id="2.40.270.10">
    <property type="entry name" value="DNA-directed RNA polymerase, subunit 2, domain 6"/>
    <property type="match status" value="1"/>
</dbReference>
<dbReference type="Gene3D" id="3.90.1800.10">
    <property type="entry name" value="RNA polymerase alpha subunit dimerisation domain"/>
    <property type="match status" value="1"/>
</dbReference>
<dbReference type="HAMAP" id="MF_01321">
    <property type="entry name" value="RNApol_bact_RpoB"/>
    <property type="match status" value="1"/>
</dbReference>
<dbReference type="InterPro" id="IPR042107">
    <property type="entry name" value="DNA-dir_RNA_pol_bsu_ext_1_sf"/>
</dbReference>
<dbReference type="InterPro" id="IPR019462">
    <property type="entry name" value="DNA-dir_RNA_pol_bsu_external_1"/>
</dbReference>
<dbReference type="InterPro" id="IPR015712">
    <property type="entry name" value="DNA-dir_RNA_pol_su2"/>
</dbReference>
<dbReference type="InterPro" id="IPR007120">
    <property type="entry name" value="DNA-dir_RNAP_su2_dom"/>
</dbReference>
<dbReference type="InterPro" id="IPR037033">
    <property type="entry name" value="DNA-dir_RNAP_su2_hyb_sf"/>
</dbReference>
<dbReference type="InterPro" id="IPR010243">
    <property type="entry name" value="RNA_pol_bsu_bac"/>
</dbReference>
<dbReference type="InterPro" id="IPR007121">
    <property type="entry name" value="RNA_pol_bsu_CS"/>
</dbReference>
<dbReference type="InterPro" id="IPR007644">
    <property type="entry name" value="RNA_pol_bsu_protrusion"/>
</dbReference>
<dbReference type="InterPro" id="IPR007642">
    <property type="entry name" value="RNA_pol_Rpb2_2"/>
</dbReference>
<dbReference type="InterPro" id="IPR007645">
    <property type="entry name" value="RNA_pol_Rpb2_3"/>
</dbReference>
<dbReference type="InterPro" id="IPR007641">
    <property type="entry name" value="RNA_pol_Rpb2_7"/>
</dbReference>
<dbReference type="InterPro" id="IPR014724">
    <property type="entry name" value="RNA_pol_RPB2_OB-fold"/>
</dbReference>
<dbReference type="NCBIfam" id="NF001616">
    <property type="entry name" value="PRK00405.1"/>
    <property type="match status" value="1"/>
</dbReference>
<dbReference type="NCBIfam" id="TIGR02013">
    <property type="entry name" value="rpoB"/>
    <property type="match status" value="1"/>
</dbReference>
<dbReference type="PANTHER" id="PTHR20856">
    <property type="entry name" value="DNA-DIRECTED RNA POLYMERASE I SUBUNIT 2"/>
    <property type="match status" value="1"/>
</dbReference>
<dbReference type="Pfam" id="PF04563">
    <property type="entry name" value="RNA_pol_Rpb2_1"/>
    <property type="match status" value="1"/>
</dbReference>
<dbReference type="Pfam" id="PF04561">
    <property type="entry name" value="RNA_pol_Rpb2_2"/>
    <property type="match status" value="2"/>
</dbReference>
<dbReference type="Pfam" id="PF04565">
    <property type="entry name" value="RNA_pol_Rpb2_3"/>
    <property type="match status" value="1"/>
</dbReference>
<dbReference type="Pfam" id="PF10385">
    <property type="entry name" value="RNA_pol_Rpb2_45"/>
    <property type="match status" value="1"/>
</dbReference>
<dbReference type="Pfam" id="PF00562">
    <property type="entry name" value="RNA_pol_Rpb2_6"/>
    <property type="match status" value="1"/>
</dbReference>
<dbReference type="Pfam" id="PF04560">
    <property type="entry name" value="RNA_pol_Rpb2_7"/>
    <property type="match status" value="1"/>
</dbReference>
<dbReference type="SUPFAM" id="SSF64484">
    <property type="entry name" value="beta and beta-prime subunits of DNA dependent RNA-polymerase"/>
    <property type="match status" value="1"/>
</dbReference>
<dbReference type="PROSITE" id="PS01166">
    <property type="entry name" value="RNA_POL_BETA"/>
    <property type="match status" value="1"/>
</dbReference>
<reference key="1">
    <citation type="journal article" date="2003" name="Lancet">
        <title>Genome sequence of Vibrio parahaemolyticus: a pathogenic mechanism distinct from that of V. cholerae.</title>
        <authorList>
            <person name="Makino K."/>
            <person name="Oshima K."/>
            <person name="Kurokawa K."/>
            <person name="Yokoyama K."/>
            <person name="Uda T."/>
            <person name="Tagomori K."/>
            <person name="Iijima Y."/>
            <person name="Najima M."/>
            <person name="Nakano M."/>
            <person name="Yamashita A."/>
            <person name="Kubota Y."/>
            <person name="Kimura S."/>
            <person name="Yasunaga T."/>
            <person name="Honda T."/>
            <person name="Shinagawa H."/>
            <person name="Hattori M."/>
            <person name="Iida T."/>
        </authorList>
    </citation>
    <scope>NUCLEOTIDE SEQUENCE [LARGE SCALE GENOMIC DNA]</scope>
    <source>
        <strain>RIMD 2210633</strain>
    </source>
</reference>
<evidence type="ECO:0000255" key="1">
    <source>
        <dbReference type="HAMAP-Rule" id="MF_01321"/>
    </source>
</evidence>